<dbReference type="EC" id="2.7.7.6" evidence="1"/>
<dbReference type="EMBL" id="CP000100">
    <property type="protein sequence ID" value="ABB57554.1"/>
    <property type="molecule type" value="Genomic_DNA"/>
</dbReference>
<dbReference type="PDB" id="8H02">
    <property type="method" value="X-ray"/>
    <property type="resolution" value="1.55 A"/>
    <property type="chains" value="A=350-433"/>
</dbReference>
<dbReference type="PDB" id="8SYI">
    <property type="method" value="EM"/>
    <property type="resolution" value="2.94 A"/>
    <property type="chains" value="Z=1-1318"/>
</dbReference>
<dbReference type="PDB" id="8URW">
    <property type="method" value="EM"/>
    <property type="resolution" value="2.79 A"/>
    <property type="chains" value="Z=1-1318"/>
</dbReference>
<dbReference type="PDBsum" id="8H02"/>
<dbReference type="PDBsum" id="8SYI"/>
<dbReference type="PDBsum" id="8URW"/>
<dbReference type="EMDB" id="EMD-40874"/>
<dbReference type="EMDB" id="EMD-42502"/>
<dbReference type="SMR" id="Q31N15"/>
<dbReference type="STRING" id="1140.Synpcc7942_1524"/>
<dbReference type="PaxDb" id="1140-Synpcc7942_1524"/>
<dbReference type="KEGG" id="syf:Synpcc7942_1524"/>
<dbReference type="eggNOG" id="COG0086">
    <property type="taxonomic scope" value="Bacteria"/>
</dbReference>
<dbReference type="HOGENOM" id="CLU_000524_1_0_3"/>
<dbReference type="OrthoDB" id="9815296at2"/>
<dbReference type="BioCyc" id="SYNEL:SYNPCC7942_1524-MONOMER"/>
<dbReference type="Proteomes" id="UP000889800">
    <property type="component" value="Chromosome"/>
</dbReference>
<dbReference type="GO" id="GO:0000428">
    <property type="term" value="C:DNA-directed RNA polymerase complex"/>
    <property type="evidence" value="ECO:0007669"/>
    <property type="project" value="UniProtKB-KW"/>
</dbReference>
<dbReference type="GO" id="GO:0003677">
    <property type="term" value="F:DNA binding"/>
    <property type="evidence" value="ECO:0007669"/>
    <property type="project" value="UniProtKB-UniRule"/>
</dbReference>
<dbReference type="GO" id="GO:0003899">
    <property type="term" value="F:DNA-directed RNA polymerase activity"/>
    <property type="evidence" value="ECO:0007669"/>
    <property type="project" value="UniProtKB-UniRule"/>
</dbReference>
<dbReference type="GO" id="GO:0008270">
    <property type="term" value="F:zinc ion binding"/>
    <property type="evidence" value="ECO:0007669"/>
    <property type="project" value="UniProtKB-UniRule"/>
</dbReference>
<dbReference type="GO" id="GO:0006351">
    <property type="term" value="P:DNA-templated transcription"/>
    <property type="evidence" value="ECO:0007669"/>
    <property type="project" value="UniProtKB-UniRule"/>
</dbReference>
<dbReference type="CDD" id="cd02655">
    <property type="entry name" value="RNAP_beta'_C"/>
    <property type="match status" value="1"/>
</dbReference>
<dbReference type="FunFam" id="1.10.150.390:FF:000002">
    <property type="entry name" value="DNA-directed RNA polymerase subunit beta"/>
    <property type="match status" value="1"/>
</dbReference>
<dbReference type="Gene3D" id="1.10.132.30">
    <property type="match status" value="1"/>
</dbReference>
<dbReference type="Gene3D" id="1.10.150.390">
    <property type="match status" value="1"/>
</dbReference>
<dbReference type="Gene3D" id="1.10.1790.20">
    <property type="match status" value="1"/>
</dbReference>
<dbReference type="Gene3D" id="2.40.50.100">
    <property type="match status" value="1"/>
</dbReference>
<dbReference type="Gene3D" id="1.10.274.100">
    <property type="entry name" value="RNA polymerase Rpb1, domain 3"/>
    <property type="match status" value="1"/>
</dbReference>
<dbReference type="HAMAP" id="MF_01324">
    <property type="entry name" value="RNApol_bact_RpoC2"/>
    <property type="match status" value="1"/>
</dbReference>
<dbReference type="InterPro" id="IPR012756">
    <property type="entry name" value="DNA-dir_RpoC2_beta_pp"/>
</dbReference>
<dbReference type="InterPro" id="IPR045867">
    <property type="entry name" value="DNA-dir_RpoC_beta_prime"/>
</dbReference>
<dbReference type="InterPro" id="IPR007066">
    <property type="entry name" value="RNA_pol_Rpb1_3"/>
</dbReference>
<dbReference type="InterPro" id="IPR042102">
    <property type="entry name" value="RNA_pol_Rpb1_3_sf"/>
</dbReference>
<dbReference type="InterPro" id="IPR007083">
    <property type="entry name" value="RNA_pol_Rpb1_4"/>
</dbReference>
<dbReference type="InterPro" id="IPR007081">
    <property type="entry name" value="RNA_pol_Rpb1_5"/>
</dbReference>
<dbReference type="InterPro" id="IPR038120">
    <property type="entry name" value="Rpb1_funnel_sf"/>
</dbReference>
<dbReference type="NCBIfam" id="NF002724">
    <property type="entry name" value="PRK02597.1"/>
    <property type="match status" value="1"/>
</dbReference>
<dbReference type="NCBIfam" id="TIGR02388">
    <property type="entry name" value="rpoC2_cyan"/>
    <property type="match status" value="1"/>
</dbReference>
<dbReference type="PANTHER" id="PTHR19376">
    <property type="entry name" value="DNA-DIRECTED RNA POLYMERASE"/>
    <property type="match status" value="1"/>
</dbReference>
<dbReference type="PANTHER" id="PTHR19376:SF68">
    <property type="entry name" value="DNA-DIRECTED RNA POLYMERASE SUBUNIT BETA"/>
    <property type="match status" value="1"/>
</dbReference>
<dbReference type="Pfam" id="PF04983">
    <property type="entry name" value="RNA_pol_Rpb1_3"/>
    <property type="match status" value="1"/>
</dbReference>
<dbReference type="Pfam" id="PF05000">
    <property type="entry name" value="RNA_pol_Rpb1_4"/>
    <property type="match status" value="1"/>
</dbReference>
<dbReference type="Pfam" id="PF04998">
    <property type="entry name" value="RNA_pol_Rpb1_5"/>
    <property type="match status" value="2"/>
</dbReference>
<dbReference type="SUPFAM" id="SSF64484">
    <property type="entry name" value="beta and beta-prime subunits of DNA dependent RNA-polymerase"/>
    <property type="match status" value="1"/>
</dbReference>
<keyword id="KW-0002">3D-structure</keyword>
<keyword id="KW-0240">DNA-directed RNA polymerase</keyword>
<keyword id="KW-0479">Metal-binding</keyword>
<keyword id="KW-0548">Nucleotidyltransferase</keyword>
<keyword id="KW-1185">Reference proteome</keyword>
<keyword id="KW-0804">Transcription</keyword>
<keyword id="KW-0808">Transferase</keyword>
<keyword id="KW-0862">Zinc</keyword>
<comment type="function">
    <text evidence="1">DNA-dependent RNA polymerase catalyzes the transcription of DNA into RNA using the four ribonucleoside triphosphates as substrates.</text>
</comment>
<comment type="catalytic activity">
    <reaction evidence="1">
        <text>RNA(n) + a ribonucleoside 5'-triphosphate = RNA(n+1) + diphosphate</text>
        <dbReference type="Rhea" id="RHEA:21248"/>
        <dbReference type="Rhea" id="RHEA-COMP:14527"/>
        <dbReference type="Rhea" id="RHEA-COMP:17342"/>
        <dbReference type="ChEBI" id="CHEBI:33019"/>
        <dbReference type="ChEBI" id="CHEBI:61557"/>
        <dbReference type="ChEBI" id="CHEBI:140395"/>
        <dbReference type="EC" id="2.7.7.6"/>
    </reaction>
</comment>
<comment type="cofactor">
    <cofactor evidence="1">
        <name>Zn(2+)</name>
        <dbReference type="ChEBI" id="CHEBI:29105"/>
    </cofactor>
    <text evidence="1">Binds 1 Zn(2+) ion per subunit.</text>
</comment>
<comment type="subunit">
    <text evidence="1">In cyanobacteria the RNAP catalytic core is composed of 2 alpha, 1 beta, 1 beta', 1 gamma and 1 omega subunit. When a sigma factor is associated with the core the holoenzyme is formed, which can initiate transcription.</text>
</comment>
<comment type="similarity">
    <text evidence="1">Belongs to the RNA polymerase beta' chain family. RpoC2 subfamily.</text>
</comment>
<accession>Q31N15</accession>
<sequence>MAEAKSAPIFRNRVIDKKQLKKLIGWTFAHYGTAKTAVVADDLKALGFRYATRAGVSISIDDLKVPGSKAELLESAEKRIQETEDRYTRGEITEVERFQKVIDTWANTNDELTDRVVKNFRESDPLNSVYMMAFSGARGNISQVRQLVGMRGLMANPQGEIIDLPIKTNFREGLTVTEYIISSYGARKGLVDTALRTADSGYLTRRLVDVSQDVIIHEVDCGTSRGLFVEAMTDGDRILIPISQRLLGRVTAEAVLDPSTDEVLAEAGQDINEDLANRIEKAGIKKVKVRSPLTCEAARSVCQKCYGWSLAHAQMVDMGEAVGIIAAQSIGEPGTQLTMRTFHTGGVFTGETARLLRAPVAGTIKLGKKARTRPYRTRHGEEALLAEANFDLVLEGKGRKETFAILQGSTIFVQDGDKVAAEAILAEVPVSGRTKRTVEKATKDVATDLAGEIRFQDIVPEEKTDRQGNTTRIAQRGGLLWVLAGDVYNLLPGAEPTVKNGDRVEVGDVLAETKLTTERGGTVRMGEDNGSSTHREVEIITASVVLDTATVKAEASQGREHYVIETKGGQRFNLLAAPGTKVTTGHVVAELIDSRYRTQTGGLLKYSGVEISKKGRAKAKQGYEVTKGGTLLWIPEETHEVNKDISLLNVEDGQLVEAGTEVVKDIFCQTTGIVSVTQNNDILREIVIKPGDVHVLDDPDTAAKYDEGRLVNAGEEVFPGLTAEQLVWAEAVDGTDGPLLLLRPVQELVIPDEPPVPSQDSSQESSSRSIRLRAVQRLQFQDGERIKSVEGVDLLRTQLVLESEEGSSQLSADIELLPDSKDPETLRLQLVIIEPVVIRRDVASDTTHGSTHTELRVKDGQKVKPGAVIACTQIQCKEAGVVRGIQEGSEAVRRLLVERERDCVTLDLDVTAATQLQPGSLIVAGTQLVDGIIAPESGEVRAIAPGQLQLRIARPYRVSQGAVLHVEDKGLVQRGDNLVLLVFERAKTGDIIQGLPRIEELLEARKPKEACILARRPGVAHINYSDDDAIDIQVIEADGTQADYPVGPGQPLIISDGETVDAGQALTDGPANPHDLLEIYYDYFREQLGEDYEAALESLRRVQALLVNEVQSVYQSQGIDISDKHIEVIVRQMTSKVRIDDGGDTIMLPGELHELREVYNSNNTMALTGMAPAQFTPVLLGITKASLNTNSFISAASFQETTRVLTEAAIEGKSDWLRGLKENVIIGRLIPAGTGFKAYEESLLTDVDGGYEDRVYDDDLADVVIDDRAARSYTLNEGRDFSRSMTFAEGESMILDDGEELIDDSSASLRNLVDVDED</sequence>
<name>RPOC2_SYNE7</name>
<feature type="chain" id="PRO_0000353532" description="DNA-directed RNA polymerase subunit beta'">
    <location>
        <begin position="1"/>
        <end position="1318"/>
    </location>
</feature>
<feature type="binding site" evidence="1">
    <location>
        <position position="221"/>
    </location>
    <ligand>
        <name>Zn(2+)</name>
        <dbReference type="ChEBI" id="CHEBI:29105"/>
    </ligand>
</feature>
<feature type="binding site" evidence="1">
    <location>
        <position position="295"/>
    </location>
    <ligand>
        <name>Zn(2+)</name>
        <dbReference type="ChEBI" id="CHEBI:29105"/>
    </ligand>
</feature>
<feature type="binding site" evidence="1">
    <location>
        <position position="302"/>
    </location>
    <ligand>
        <name>Zn(2+)</name>
        <dbReference type="ChEBI" id="CHEBI:29105"/>
    </ligand>
</feature>
<feature type="binding site" evidence="1">
    <location>
        <position position="305"/>
    </location>
    <ligand>
        <name>Zn(2+)</name>
        <dbReference type="ChEBI" id="CHEBI:29105"/>
    </ligand>
</feature>
<feature type="strand" evidence="4">
    <location>
        <begin position="10"/>
        <end position="13"/>
    </location>
</feature>
<feature type="helix" evidence="4">
    <location>
        <begin position="17"/>
        <end position="30"/>
    </location>
</feature>
<feature type="helix" evidence="4">
    <location>
        <begin position="35"/>
        <end position="54"/>
    </location>
</feature>
<feature type="helix" evidence="4">
    <location>
        <begin position="69"/>
        <end position="89"/>
    </location>
</feature>
<feature type="helix" evidence="4">
    <location>
        <begin position="94"/>
        <end position="123"/>
    </location>
</feature>
<feature type="helix" evidence="4">
    <location>
        <begin position="128"/>
        <end position="133"/>
    </location>
</feature>
<feature type="strand" evidence="4">
    <location>
        <begin position="136"/>
        <end position="138"/>
    </location>
</feature>
<feature type="helix" evidence="4">
    <location>
        <begin position="141"/>
        <end position="148"/>
    </location>
</feature>
<feature type="strand" evidence="4">
    <location>
        <begin position="159"/>
        <end position="161"/>
    </location>
</feature>
<feature type="turn" evidence="4">
    <location>
        <begin position="170"/>
        <end position="172"/>
    </location>
</feature>
<feature type="helix" evidence="4">
    <location>
        <begin position="176"/>
        <end position="193"/>
    </location>
</feature>
<feature type="helix" evidence="4">
    <location>
        <begin position="197"/>
        <end position="210"/>
    </location>
</feature>
<feature type="strand" evidence="4">
    <location>
        <begin position="227"/>
        <end position="229"/>
    </location>
</feature>
<feature type="strand" evidence="4">
    <location>
        <begin position="232"/>
        <end position="234"/>
    </location>
</feature>
<feature type="strand" evidence="4">
    <location>
        <begin position="237"/>
        <end position="240"/>
    </location>
</feature>
<feature type="helix" evidence="4">
    <location>
        <begin position="242"/>
        <end position="245"/>
    </location>
</feature>
<feature type="strand" evidence="3">
    <location>
        <begin position="246"/>
        <end position="248"/>
    </location>
</feature>
<feature type="strand" evidence="4">
    <location>
        <begin position="250"/>
        <end position="253"/>
    </location>
</feature>
<feature type="strand" evidence="4">
    <location>
        <begin position="258"/>
        <end position="261"/>
    </location>
</feature>
<feature type="strand" evidence="4">
    <location>
        <begin position="263"/>
        <end position="265"/>
    </location>
</feature>
<feature type="helix" evidence="4">
    <location>
        <begin position="273"/>
        <end position="281"/>
    </location>
</feature>
<feature type="strand" evidence="4">
    <location>
        <begin position="287"/>
        <end position="289"/>
    </location>
</feature>
<feature type="helix" evidence="4">
    <location>
        <begin position="292"/>
        <end position="294"/>
    </location>
</feature>
<feature type="strand" evidence="4">
    <location>
        <begin position="298"/>
        <end position="300"/>
    </location>
</feature>
<feature type="helix" evidence="4">
    <location>
        <begin position="303"/>
        <end position="306"/>
    </location>
</feature>
<feature type="turn" evidence="4">
    <location>
        <begin position="310"/>
        <end position="312"/>
    </location>
</feature>
<feature type="strand" evidence="4">
    <location>
        <begin position="313"/>
        <end position="315"/>
    </location>
</feature>
<feature type="helix" evidence="4">
    <location>
        <begin position="322"/>
        <end position="330"/>
    </location>
</feature>
<feature type="helix" evidence="4">
    <location>
        <begin position="332"/>
        <end position="338"/>
    </location>
</feature>
<feature type="helix" evidence="4">
    <location>
        <begin position="339"/>
        <end position="344"/>
    </location>
</feature>
<feature type="strand" evidence="2">
    <location>
        <begin position="353"/>
        <end position="357"/>
    </location>
</feature>
<feature type="strand" evidence="2">
    <location>
        <begin position="362"/>
        <end position="365"/>
    </location>
</feature>
<feature type="strand" evidence="2">
    <location>
        <begin position="372"/>
        <end position="376"/>
    </location>
</feature>
<feature type="strand" evidence="3">
    <location>
        <begin position="378"/>
        <end position="380"/>
    </location>
</feature>
<feature type="strand" evidence="2">
    <location>
        <begin position="382"/>
        <end position="386"/>
    </location>
</feature>
<feature type="strand" evidence="2">
    <location>
        <begin position="390"/>
        <end position="398"/>
    </location>
</feature>
<feature type="strand" evidence="2">
    <location>
        <begin position="400"/>
        <end position="405"/>
    </location>
</feature>
<feature type="strand" evidence="3">
    <location>
        <begin position="409"/>
        <end position="411"/>
    </location>
</feature>
<feature type="strand" evidence="2">
    <location>
        <begin position="424"/>
        <end position="429"/>
    </location>
</feature>
<feature type="strand" evidence="4">
    <location>
        <begin position="441"/>
        <end position="446"/>
    </location>
</feature>
<feature type="strand" evidence="4">
    <location>
        <begin position="451"/>
        <end position="457"/>
    </location>
</feature>
<feature type="strand" evidence="4">
    <location>
        <begin position="459"/>
        <end position="464"/>
    </location>
</feature>
<feature type="strand" evidence="4">
    <location>
        <begin position="470"/>
        <end position="476"/>
    </location>
</feature>
<feature type="strand" evidence="4">
    <location>
        <begin position="478"/>
        <end position="484"/>
    </location>
</feature>
<feature type="strand" evidence="4">
    <location>
        <begin position="486"/>
        <end position="489"/>
    </location>
</feature>
<feature type="strand" evidence="4">
    <location>
        <begin position="509"/>
        <end position="512"/>
    </location>
</feature>
<feature type="strand" evidence="4">
    <location>
        <begin position="529"/>
        <end position="533"/>
    </location>
</feature>
<feature type="strand" evidence="3">
    <location>
        <begin position="546"/>
        <end position="548"/>
    </location>
</feature>
<feature type="turn" evidence="4">
    <location>
        <begin position="557"/>
        <end position="560"/>
    </location>
</feature>
<feature type="strand" evidence="3">
    <location>
        <begin position="563"/>
        <end position="566"/>
    </location>
</feature>
<feature type="turn" evidence="3">
    <location>
        <begin position="567"/>
        <end position="569"/>
    </location>
</feature>
<feature type="strand" evidence="3">
    <location>
        <begin position="570"/>
        <end position="573"/>
    </location>
</feature>
<feature type="strand" evidence="3">
    <location>
        <begin position="584"/>
        <end position="586"/>
    </location>
</feature>
<feature type="strand" evidence="4">
    <location>
        <begin position="594"/>
        <end position="597"/>
    </location>
</feature>
<feature type="strand" evidence="3">
    <location>
        <begin position="603"/>
        <end position="605"/>
    </location>
</feature>
<feature type="strand" evidence="4">
    <location>
        <begin position="606"/>
        <end position="608"/>
    </location>
</feature>
<feature type="strand" evidence="4">
    <location>
        <begin position="617"/>
        <end position="619"/>
    </location>
</feature>
<feature type="strand" evidence="3">
    <location>
        <begin position="622"/>
        <end position="625"/>
    </location>
</feature>
<feature type="strand" evidence="3">
    <location>
        <begin position="632"/>
        <end position="634"/>
    </location>
</feature>
<feature type="turn" evidence="4">
    <location>
        <begin position="645"/>
        <end position="647"/>
    </location>
</feature>
<feature type="strand" evidence="4">
    <location>
        <begin position="660"/>
        <end position="665"/>
    </location>
</feature>
<feature type="strand" evidence="4">
    <location>
        <begin position="667"/>
        <end position="671"/>
    </location>
</feature>
<feature type="strand" evidence="4">
    <location>
        <begin position="680"/>
        <end position="683"/>
    </location>
</feature>
<feature type="strand" evidence="3">
    <location>
        <begin position="692"/>
        <end position="698"/>
    </location>
</feature>
<feature type="strand" evidence="4">
    <location>
        <begin position="699"/>
        <end position="704"/>
    </location>
</feature>
<feature type="strand" evidence="3">
    <location>
        <begin position="706"/>
        <end position="708"/>
    </location>
</feature>
<feature type="strand" evidence="4">
    <location>
        <begin position="713"/>
        <end position="715"/>
    </location>
</feature>
<feature type="strand" evidence="3">
    <location>
        <begin position="717"/>
        <end position="720"/>
    </location>
</feature>
<feature type="strand" evidence="3">
    <location>
        <begin position="725"/>
        <end position="728"/>
    </location>
</feature>
<feature type="strand" evidence="4">
    <location>
        <begin position="735"/>
        <end position="738"/>
    </location>
</feature>
<feature type="helix" evidence="3">
    <location>
        <begin position="765"/>
        <end position="767"/>
    </location>
</feature>
<feature type="strand" evidence="3">
    <location>
        <begin position="773"/>
        <end position="778"/>
    </location>
</feature>
<feature type="strand" evidence="4">
    <location>
        <begin position="781"/>
        <end position="785"/>
    </location>
</feature>
<feature type="strand" evidence="3">
    <location>
        <begin position="797"/>
        <end position="800"/>
    </location>
</feature>
<feature type="turn" evidence="4">
    <location>
        <begin position="805"/>
        <end position="810"/>
    </location>
</feature>
<feature type="strand" evidence="4">
    <location>
        <begin position="821"/>
        <end position="823"/>
    </location>
</feature>
<feature type="strand" evidence="4">
    <location>
        <begin position="846"/>
        <end position="848"/>
    </location>
</feature>
<feature type="strand" evidence="3">
    <location>
        <begin position="851"/>
        <end position="855"/>
    </location>
</feature>
<feature type="strand" evidence="4">
    <location>
        <begin position="862"/>
        <end position="865"/>
    </location>
</feature>
<feature type="strand" evidence="4">
    <location>
        <begin position="873"/>
        <end position="875"/>
    </location>
</feature>
<feature type="strand" evidence="4">
    <location>
        <begin position="880"/>
        <end position="883"/>
    </location>
</feature>
<feature type="strand" evidence="4">
    <location>
        <begin position="894"/>
        <end position="898"/>
    </location>
</feature>
<feature type="turn" evidence="3">
    <location>
        <begin position="900"/>
        <end position="902"/>
    </location>
</feature>
<feature type="strand" evidence="4">
    <location>
        <begin position="903"/>
        <end position="906"/>
    </location>
</feature>
<feature type="strand" evidence="3">
    <location>
        <begin position="913"/>
        <end position="915"/>
    </location>
</feature>
<feature type="strand" evidence="4">
    <location>
        <begin position="929"/>
        <end position="931"/>
    </location>
</feature>
<feature type="strand" evidence="4">
    <location>
        <begin position="938"/>
        <end position="943"/>
    </location>
</feature>
<feature type="strand" evidence="3">
    <location>
        <begin position="945"/>
        <end position="947"/>
    </location>
</feature>
<feature type="strand" evidence="4">
    <location>
        <begin position="948"/>
        <end position="958"/>
    </location>
</feature>
<feature type="strand" evidence="4">
    <location>
        <begin position="977"/>
        <end position="983"/>
    </location>
</feature>
<feature type="helix" evidence="4">
    <location>
        <begin position="991"/>
        <end position="993"/>
    </location>
</feature>
<feature type="helix" evidence="4">
    <location>
        <begin position="995"/>
        <end position="1002"/>
    </location>
</feature>
<feature type="helix" evidence="4">
    <location>
        <begin position="1026"/>
        <end position="1028"/>
    </location>
</feature>
<feature type="strand" evidence="4">
    <location>
        <begin position="1030"/>
        <end position="1034"/>
    </location>
</feature>
<feature type="strand" evidence="3">
    <location>
        <begin position="1037"/>
        <end position="1039"/>
    </location>
</feature>
<feature type="strand" evidence="3">
    <location>
        <begin position="1048"/>
        <end position="1051"/>
    </location>
</feature>
<feature type="strand" evidence="4">
    <location>
        <begin position="1065"/>
        <end position="1067"/>
    </location>
</feature>
<feature type="helix" evidence="4">
    <location>
        <begin position="1073"/>
        <end position="1087"/>
    </location>
</feature>
<feature type="strand" evidence="4">
    <location>
        <begin position="1088"/>
        <end position="1091"/>
    </location>
</feature>
<feature type="helix" evidence="4">
    <location>
        <begin position="1092"/>
        <end position="1116"/>
    </location>
</feature>
<feature type="helix" evidence="4">
    <location>
        <begin position="1123"/>
        <end position="1131"/>
    </location>
</feature>
<feature type="strand" evidence="4">
    <location>
        <begin position="1134"/>
        <end position="1141"/>
    </location>
</feature>
<feature type="strand" evidence="4">
    <location>
        <begin position="1144"/>
        <end position="1146"/>
    </location>
</feature>
<feature type="strand" evidence="4">
    <location>
        <begin position="1152"/>
        <end position="1154"/>
    </location>
</feature>
<feature type="helix" evidence="4">
    <location>
        <begin position="1155"/>
        <end position="1165"/>
    </location>
</feature>
<feature type="turn" evidence="4">
    <location>
        <begin position="1166"/>
        <end position="1168"/>
    </location>
</feature>
<feature type="strand" evidence="4">
    <location>
        <begin position="1174"/>
        <end position="1177"/>
    </location>
</feature>
<feature type="helix" evidence="4">
    <location>
        <begin position="1182"/>
        <end position="1186"/>
    </location>
</feature>
<feature type="helix" evidence="4">
    <location>
        <begin position="1192"/>
        <end position="1196"/>
    </location>
</feature>
<feature type="helix" evidence="4">
    <location>
        <begin position="1201"/>
        <end position="1211"/>
    </location>
</feature>
<feature type="turn" evidence="4">
    <location>
        <begin position="1220"/>
        <end position="1222"/>
    </location>
</feature>
<feature type="helix" evidence="4">
    <location>
        <begin position="1223"/>
        <end position="1226"/>
    </location>
</feature>
<feature type="helix" evidence="4">
    <location>
        <begin position="1233"/>
        <end position="1235"/>
    </location>
</feature>
<protein>
    <recommendedName>
        <fullName evidence="1">DNA-directed RNA polymerase subunit beta'</fullName>
        <shortName evidence="1">RNAP subunit beta'</shortName>
        <ecNumber evidence="1">2.7.7.6</ecNumber>
    </recommendedName>
    <alternativeName>
        <fullName evidence="1">RNA polymerase subunit beta'</fullName>
    </alternativeName>
    <alternativeName>
        <fullName evidence="1">Transcriptase subunit beta'</fullName>
    </alternativeName>
</protein>
<evidence type="ECO:0000255" key="1">
    <source>
        <dbReference type="HAMAP-Rule" id="MF_01324"/>
    </source>
</evidence>
<evidence type="ECO:0007829" key="2">
    <source>
        <dbReference type="PDB" id="8H02"/>
    </source>
</evidence>
<evidence type="ECO:0007829" key="3">
    <source>
        <dbReference type="PDB" id="8SYI"/>
    </source>
</evidence>
<evidence type="ECO:0007829" key="4">
    <source>
        <dbReference type="PDB" id="8URW"/>
    </source>
</evidence>
<organism>
    <name type="scientific">Synechococcus elongatus (strain ATCC 33912 / PCC 7942 / FACHB-805)</name>
    <name type="common">Anacystis nidulans R2</name>
    <dbReference type="NCBI Taxonomy" id="1140"/>
    <lineage>
        <taxon>Bacteria</taxon>
        <taxon>Bacillati</taxon>
        <taxon>Cyanobacteriota</taxon>
        <taxon>Cyanophyceae</taxon>
        <taxon>Synechococcales</taxon>
        <taxon>Synechococcaceae</taxon>
        <taxon>Synechococcus</taxon>
    </lineage>
</organism>
<proteinExistence type="evidence at protein level"/>
<gene>
    <name evidence="1" type="primary">rpoC2</name>
    <name type="ordered locus">Synpcc7942_1524</name>
</gene>
<reference key="1">
    <citation type="submission" date="2005-08" db="EMBL/GenBank/DDBJ databases">
        <title>Complete sequence of chromosome 1 of Synechococcus elongatus PCC 7942.</title>
        <authorList>
            <consortium name="US DOE Joint Genome Institute"/>
            <person name="Copeland A."/>
            <person name="Lucas S."/>
            <person name="Lapidus A."/>
            <person name="Barry K."/>
            <person name="Detter J.C."/>
            <person name="Glavina T."/>
            <person name="Hammon N."/>
            <person name="Israni S."/>
            <person name="Pitluck S."/>
            <person name="Schmutz J."/>
            <person name="Larimer F."/>
            <person name="Land M."/>
            <person name="Kyrpides N."/>
            <person name="Lykidis A."/>
            <person name="Golden S."/>
            <person name="Richardson P."/>
        </authorList>
    </citation>
    <scope>NUCLEOTIDE SEQUENCE [LARGE SCALE GENOMIC DNA]</scope>
    <source>
        <strain>ATCC 33912 / PCC 7942 / FACHB-805</strain>
    </source>
</reference>